<reference key="1">
    <citation type="journal article" date="2005" name="Dev. Biol.">
        <title>Glutathione is required for growth and prespore cell differentiation in Dictyostelium.</title>
        <authorList>
            <person name="Kim B.-J."/>
            <person name="Choi C.-H."/>
            <person name="Lee C.-H."/>
            <person name="Jeong S.-Y."/>
            <person name="Kim J.-S."/>
            <person name="Kim B.-Y."/>
            <person name="Yim H.-S."/>
            <person name="Kang S.-O."/>
        </authorList>
    </citation>
    <scope>NUCLEOTIDE SEQUENCE [MRNA]</scope>
    <scope>FUNCTION</scope>
    <scope>CATALYTIC ACTIVITY</scope>
    <scope>DEVELOPMENTAL STAGE</scope>
    <scope>DISRUPTION PHENOTYPE</scope>
</reference>
<reference key="2">
    <citation type="journal article" date="2005" name="Nature">
        <title>The genome of the social amoeba Dictyostelium discoideum.</title>
        <authorList>
            <person name="Eichinger L."/>
            <person name="Pachebat J.A."/>
            <person name="Gloeckner G."/>
            <person name="Rajandream M.A."/>
            <person name="Sucgang R."/>
            <person name="Berriman M."/>
            <person name="Song J."/>
            <person name="Olsen R."/>
            <person name="Szafranski K."/>
            <person name="Xu Q."/>
            <person name="Tunggal B."/>
            <person name="Kummerfeld S."/>
            <person name="Madera M."/>
            <person name="Konfortov B.A."/>
            <person name="Rivero F."/>
            <person name="Bankier A.T."/>
            <person name="Lehmann R."/>
            <person name="Hamlin N."/>
            <person name="Davies R."/>
            <person name="Gaudet P."/>
            <person name="Fey P."/>
            <person name="Pilcher K."/>
            <person name="Chen G."/>
            <person name="Saunders D."/>
            <person name="Sodergren E.J."/>
            <person name="Davis P."/>
            <person name="Kerhornou A."/>
            <person name="Nie X."/>
            <person name="Hall N."/>
            <person name="Anjard C."/>
            <person name="Hemphill L."/>
            <person name="Bason N."/>
            <person name="Farbrother P."/>
            <person name="Desany B."/>
            <person name="Just E."/>
            <person name="Morio T."/>
            <person name="Rost R."/>
            <person name="Churcher C.M."/>
            <person name="Cooper J."/>
            <person name="Haydock S."/>
            <person name="van Driessche N."/>
            <person name="Cronin A."/>
            <person name="Goodhead I."/>
            <person name="Muzny D.M."/>
            <person name="Mourier T."/>
            <person name="Pain A."/>
            <person name="Lu M."/>
            <person name="Harper D."/>
            <person name="Lindsay R."/>
            <person name="Hauser H."/>
            <person name="James K.D."/>
            <person name="Quiles M."/>
            <person name="Madan Babu M."/>
            <person name="Saito T."/>
            <person name="Buchrieser C."/>
            <person name="Wardroper A."/>
            <person name="Felder M."/>
            <person name="Thangavelu M."/>
            <person name="Johnson D."/>
            <person name="Knights A."/>
            <person name="Loulseged H."/>
            <person name="Mungall K.L."/>
            <person name="Oliver K."/>
            <person name="Price C."/>
            <person name="Quail M.A."/>
            <person name="Urushihara H."/>
            <person name="Hernandez J."/>
            <person name="Rabbinowitsch E."/>
            <person name="Steffen D."/>
            <person name="Sanders M."/>
            <person name="Ma J."/>
            <person name="Kohara Y."/>
            <person name="Sharp S."/>
            <person name="Simmonds M.N."/>
            <person name="Spiegler S."/>
            <person name="Tivey A."/>
            <person name="Sugano S."/>
            <person name="White B."/>
            <person name="Walker D."/>
            <person name="Woodward J.R."/>
            <person name="Winckler T."/>
            <person name="Tanaka Y."/>
            <person name="Shaulsky G."/>
            <person name="Schleicher M."/>
            <person name="Weinstock G.M."/>
            <person name="Rosenthal A."/>
            <person name="Cox E.C."/>
            <person name="Chisholm R.L."/>
            <person name="Gibbs R.A."/>
            <person name="Loomis W.F."/>
            <person name="Platzer M."/>
            <person name="Kay R.R."/>
            <person name="Williams J.G."/>
            <person name="Dear P.H."/>
            <person name="Noegel A.A."/>
            <person name="Barrell B.G."/>
            <person name="Kuspa A."/>
        </authorList>
    </citation>
    <scope>NUCLEOTIDE SEQUENCE [LARGE SCALE GENOMIC DNA]</scope>
    <source>
        <strain>AX4</strain>
    </source>
</reference>
<organism>
    <name type="scientific">Dictyostelium discoideum</name>
    <name type="common">Social amoeba</name>
    <dbReference type="NCBI Taxonomy" id="44689"/>
    <lineage>
        <taxon>Eukaryota</taxon>
        <taxon>Amoebozoa</taxon>
        <taxon>Evosea</taxon>
        <taxon>Eumycetozoa</taxon>
        <taxon>Dictyostelia</taxon>
        <taxon>Dictyosteliales</taxon>
        <taxon>Dictyosteliaceae</taxon>
        <taxon>Dictyostelium</taxon>
    </lineage>
</organism>
<proteinExistence type="evidence at protein level"/>
<name>GSH1_DICDI</name>
<protein>
    <recommendedName>
        <fullName>Glutamate--cysteine ligase</fullName>
        <ecNumber evidence="4">6.3.2.2</ecNumber>
    </recommendedName>
    <alternativeName>
        <fullName>Gamma-ECS</fullName>
        <shortName evidence="2">GCS</shortName>
    </alternativeName>
    <alternativeName>
        <fullName>Gamma-glutamylcysteine synthetase</fullName>
    </alternativeName>
</protein>
<feature type="chain" id="PRO_0000327705" description="Glutamate--cysteine ligase">
    <location>
        <begin position="1"/>
        <end position="626"/>
    </location>
</feature>
<sequence>MGFIAEGNTLAWEDSVKYLEYIREHGVIQLLNIIKNNKDKVTEDFKWGDEVEYILINNDNYKLKLRANEILDLLMLEEKRNPTTVEHLWRPEYGRFMIEGTPGSPYIGLGKQLLSIQSNLKSRRENVEKYLKPNESILTITSYPRMGCKNFTDPQGEVKGPIAESKFLPDTVINPHFRFSTLTANIRKRRGGTVSINIPMYRDKNTPEYLDQICTYEKVPPILDDSDNSQTNISSPSNQPFNIYMDAMGFGMGCCCLQTTFQLPNIDDARTVYDQLAPISPLMLSLTAASSIFKGYLSDIDARWTIISQSVDDRNKEELGKAPLNNNKFVINKSRYDSIDSYIGSKSKSFRSEYNDLDLVYDKDVYQKLIENGVDSLLSKHFAHLFIRDPLVIYSDKIEIDDEKNTDHFENIQSTNWQTVRFKPPPPSSSIGWRVELRPMEVQLTDFQNSAFVVFSAILVKAIQDLKLNFYIPITKVDENLKTAHKRASVINDKFYFRKNIYNNTPNGSIENEYELMTINEIFNGKGGDNKGLIGVIRDYISTLDFDNETTELVNKYIKFISKRASGEIKSISTWTREFVQNHPAYNHDSIVNDEIQADYLQRCLDISNGTIYDSSIQGDKDDYYC</sequence>
<keyword id="KW-0067">ATP-binding</keyword>
<keyword id="KW-0217">Developmental protein</keyword>
<keyword id="KW-0221">Differentiation</keyword>
<keyword id="KW-0317">Glutathione biosynthesis</keyword>
<keyword id="KW-0436">Ligase</keyword>
<keyword id="KW-0547">Nucleotide-binding</keyword>
<keyword id="KW-1185">Reference proteome</keyword>
<accession>Q54PC2</accession>
<gene>
    <name type="primary">gcsA</name>
    <name type="synonym">gshA</name>
    <name type="ORF">DDB_G0284651</name>
</gene>
<comment type="function">
    <text evidence="1 2">An essential enzyme in glutathione (L-gamma-glutamyl-L-cysteinylglycine, GSH) biosynthesis, GSH is essential for growth and differentiation to prespore stage (PubMed:15993406). Catalyzes the condensation of glutamate to cysteine (PubMed:15993406).</text>
</comment>
<comment type="catalytic activity">
    <reaction evidence="4">
        <text>L-cysteine + L-glutamate + ATP = gamma-L-glutamyl-L-cysteine + ADP + phosphate + H(+)</text>
        <dbReference type="Rhea" id="RHEA:13285"/>
        <dbReference type="ChEBI" id="CHEBI:15378"/>
        <dbReference type="ChEBI" id="CHEBI:29985"/>
        <dbReference type="ChEBI" id="CHEBI:30616"/>
        <dbReference type="ChEBI" id="CHEBI:35235"/>
        <dbReference type="ChEBI" id="CHEBI:43474"/>
        <dbReference type="ChEBI" id="CHEBI:58173"/>
        <dbReference type="ChEBI" id="CHEBI:456216"/>
        <dbReference type="EC" id="6.3.2.2"/>
    </reaction>
    <physiologicalReaction direction="left-to-right" evidence="4">
        <dbReference type="Rhea" id="RHEA:13286"/>
    </physiologicalReaction>
</comment>
<comment type="pathway">
    <text>Sulfur metabolism; glutathione biosynthesis; glutathione from L-cysteine and L-glutamate: step 1/2.</text>
</comment>
<comment type="subunit">
    <text evidence="3">Monomer.</text>
</comment>
<comment type="developmental stage">
    <text evidence="1">Expressed throughout development, expression peaking at the aggregation stage. Expression is localized in the prespore region and tip region of the tipped aggregate. At slug stage, expression is predominantly in the posterior prespore region. In the fruiting body expression is detected in basal disk and spore region containing upper cup and lower cup.</text>
</comment>
<comment type="disruption phenotype">
    <text evidence="1">Cells show defects in prespore differentiation.</text>
</comment>
<comment type="similarity">
    <text evidence="3">Belongs to the glutamate--cysteine ligase type 3 family.</text>
</comment>
<evidence type="ECO:0000269" key="1">
    <source>
    </source>
</evidence>
<evidence type="ECO:0000303" key="2">
    <source>
    </source>
</evidence>
<evidence type="ECO:0000305" key="3"/>
<evidence type="ECO:0000305" key="4">
    <source>
    </source>
</evidence>
<dbReference type="EC" id="6.3.2.2" evidence="4"/>
<dbReference type="EMBL" id="AAFI02000070">
    <property type="protein sequence ID" value="EAL65095.1"/>
    <property type="molecule type" value="Genomic_DNA"/>
</dbReference>
<dbReference type="RefSeq" id="XP_638453.1">
    <property type="nucleotide sequence ID" value="XM_633361.1"/>
</dbReference>
<dbReference type="SMR" id="Q54PC2"/>
<dbReference type="FunCoup" id="Q54PC2">
    <property type="interactions" value="159"/>
</dbReference>
<dbReference type="STRING" id="44689.Q54PC2"/>
<dbReference type="PaxDb" id="44689-DDB0231403"/>
<dbReference type="EnsemblProtists" id="EAL65095">
    <property type="protein sequence ID" value="EAL65095"/>
    <property type="gene ID" value="DDB_G0284651"/>
</dbReference>
<dbReference type="GeneID" id="8624704"/>
<dbReference type="KEGG" id="ddi:DDB_G0284651"/>
<dbReference type="dictyBase" id="DDB_G0284651">
    <property type="gene designation" value="gcsA"/>
</dbReference>
<dbReference type="VEuPathDB" id="AmoebaDB:DDB_G0284651"/>
<dbReference type="eggNOG" id="KOG3754">
    <property type="taxonomic scope" value="Eukaryota"/>
</dbReference>
<dbReference type="HOGENOM" id="CLU_010467_0_0_1"/>
<dbReference type="InParanoid" id="Q54PC2"/>
<dbReference type="OMA" id="IAHMFIR"/>
<dbReference type="PhylomeDB" id="Q54PC2"/>
<dbReference type="UniPathway" id="UPA00142">
    <property type="reaction ID" value="UER00209"/>
</dbReference>
<dbReference type="PRO" id="PR:Q54PC2"/>
<dbReference type="Proteomes" id="UP000002195">
    <property type="component" value="Chromosome 4"/>
</dbReference>
<dbReference type="GO" id="GO:0005524">
    <property type="term" value="F:ATP binding"/>
    <property type="evidence" value="ECO:0007669"/>
    <property type="project" value="UniProtKB-KW"/>
</dbReference>
<dbReference type="GO" id="GO:0004357">
    <property type="term" value="F:glutamate-cysteine ligase activity"/>
    <property type="evidence" value="ECO:0000315"/>
    <property type="project" value="UniProtKB"/>
</dbReference>
<dbReference type="GO" id="GO:0030154">
    <property type="term" value="P:cell differentiation"/>
    <property type="evidence" value="ECO:0007669"/>
    <property type="project" value="UniProtKB-KW"/>
</dbReference>
<dbReference type="GO" id="GO:0006750">
    <property type="term" value="P:glutathione biosynthetic process"/>
    <property type="evidence" value="ECO:0000315"/>
    <property type="project" value="UniProtKB"/>
</dbReference>
<dbReference type="GO" id="GO:0010628">
    <property type="term" value="P:positive regulation of gene expression"/>
    <property type="evidence" value="ECO:0000315"/>
    <property type="project" value="dictyBase"/>
</dbReference>
<dbReference type="GO" id="GO:0007346">
    <property type="term" value="P:regulation of mitotic cell cycle"/>
    <property type="evidence" value="ECO:0000315"/>
    <property type="project" value="dictyBase"/>
</dbReference>
<dbReference type="GO" id="GO:0046686">
    <property type="term" value="P:response to cadmium ion"/>
    <property type="evidence" value="ECO:0007007"/>
    <property type="project" value="dictyBase"/>
</dbReference>
<dbReference type="GO" id="GO:0030587">
    <property type="term" value="P:sorocarp development"/>
    <property type="evidence" value="ECO:0000315"/>
    <property type="project" value="dictyBase"/>
</dbReference>
<dbReference type="GO" id="GO:0030435">
    <property type="term" value="P:sporulation resulting in formation of a cellular spore"/>
    <property type="evidence" value="ECO:0000315"/>
    <property type="project" value="dictyBase"/>
</dbReference>
<dbReference type="FunFam" id="3.30.590.50:FF:000009">
    <property type="entry name" value="Glutamate--cysteine ligase"/>
    <property type="match status" value="1"/>
</dbReference>
<dbReference type="FunFam" id="3.30.590.50:FF:000002">
    <property type="entry name" value="Glutamate--cysteine ligase catalytic subunit"/>
    <property type="match status" value="1"/>
</dbReference>
<dbReference type="FunFam" id="1.10.8.960:FF:000002">
    <property type="entry name" value="Glutamate-cysteine ligase Gcs1"/>
    <property type="match status" value="1"/>
</dbReference>
<dbReference type="Gene3D" id="1.10.8.960">
    <property type="match status" value="1"/>
</dbReference>
<dbReference type="Gene3D" id="3.30.590.50">
    <property type="match status" value="2"/>
</dbReference>
<dbReference type="InterPro" id="IPR004308">
    <property type="entry name" value="GCS"/>
</dbReference>
<dbReference type="InterPro" id="IPR014746">
    <property type="entry name" value="Gln_synth/guanido_kin_cat_dom"/>
</dbReference>
<dbReference type="PANTHER" id="PTHR11164">
    <property type="entry name" value="GLUTAMATE CYSTEINE LIGASE"/>
    <property type="match status" value="1"/>
</dbReference>
<dbReference type="PANTHER" id="PTHR11164:SF0">
    <property type="entry name" value="GLUTAMATE--CYSTEINE LIGASE CATALYTIC SUBUNIT"/>
    <property type="match status" value="1"/>
</dbReference>
<dbReference type="Pfam" id="PF03074">
    <property type="entry name" value="GCS"/>
    <property type="match status" value="1"/>
</dbReference>
<dbReference type="SUPFAM" id="SSF55931">
    <property type="entry name" value="Glutamine synthetase/guanido kinase"/>
    <property type="match status" value="1"/>
</dbReference>